<organism>
    <name type="scientific">Homo sapiens</name>
    <name type="common">Human</name>
    <dbReference type="NCBI Taxonomy" id="9606"/>
    <lineage>
        <taxon>Eukaryota</taxon>
        <taxon>Metazoa</taxon>
        <taxon>Chordata</taxon>
        <taxon>Craniata</taxon>
        <taxon>Vertebrata</taxon>
        <taxon>Euteleostomi</taxon>
        <taxon>Mammalia</taxon>
        <taxon>Eutheria</taxon>
        <taxon>Euarchontoglires</taxon>
        <taxon>Primates</taxon>
        <taxon>Haplorrhini</taxon>
        <taxon>Catarrhini</taxon>
        <taxon>Hominidae</taxon>
        <taxon>Homo</taxon>
    </lineage>
</organism>
<reference key="1">
    <citation type="journal article" date="2004" name="Nat. Genet.">
        <title>Complete sequencing and characterization of 21,243 full-length human cDNAs.</title>
        <authorList>
            <person name="Ota T."/>
            <person name="Suzuki Y."/>
            <person name="Nishikawa T."/>
            <person name="Otsuki T."/>
            <person name="Sugiyama T."/>
            <person name="Irie R."/>
            <person name="Wakamatsu A."/>
            <person name="Hayashi K."/>
            <person name="Sato H."/>
            <person name="Nagai K."/>
            <person name="Kimura K."/>
            <person name="Makita H."/>
            <person name="Sekine M."/>
            <person name="Obayashi M."/>
            <person name="Nishi T."/>
            <person name="Shibahara T."/>
            <person name="Tanaka T."/>
            <person name="Ishii S."/>
            <person name="Yamamoto J."/>
            <person name="Saito K."/>
            <person name="Kawai Y."/>
            <person name="Isono Y."/>
            <person name="Nakamura Y."/>
            <person name="Nagahari K."/>
            <person name="Murakami K."/>
            <person name="Yasuda T."/>
            <person name="Iwayanagi T."/>
            <person name="Wagatsuma M."/>
            <person name="Shiratori A."/>
            <person name="Sudo H."/>
            <person name="Hosoiri T."/>
            <person name="Kaku Y."/>
            <person name="Kodaira H."/>
            <person name="Kondo H."/>
            <person name="Sugawara M."/>
            <person name="Takahashi M."/>
            <person name="Kanda K."/>
            <person name="Yokoi T."/>
            <person name="Furuya T."/>
            <person name="Kikkawa E."/>
            <person name="Omura Y."/>
            <person name="Abe K."/>
            <person name="Kamihara K."/>
            <person name="Katsuta N."/>
            <person name="Sato K."/>
            <person name="Tanikawa M."/>
            <person name="Yamazaki M."/>
            <person name="Ninomiya K."/>
            <person name="Ishibashi T."/>
            <person name="Yamashita H."/>
            <person name="Murakawa K."/>
            <person name="Fujimori K."/>
            <person name="Tanai H."/>
            <person name="Kimata M."/>
            <person name="Watanabe M."/>
            <person name="Hiraoka S."/>
            <person name="Chiba Y."/>
            <person name="Ishida S."/>
            <person name="Ono Y."/>
            <person name="Takiguchi S."/>
            <person name="Watanabe S."/>
            <person name="Yosida M."/>
            <person name="Hotuta T."/>
            <person name="Kusano J."/>
            <person name="Kanehori K."/>
            <person name="Takahashi-Fujii A."/>
            <person name="Hara H."/>
            <person name="Tanase T.-O."/>
            <person name="Nomura Y."/>
            <person name="Togiya S."/>
            <person name="Komai F."/>
            <person name="Hara R."/>
            <person name="Takeuchi K."/>
            <person name="Arita M."/>
            <person name="Imose N."/>
            <person name="Musashino K."/>
            <person name="Yuuki H."/>
            <person name="Oshima A."/>
            <person name="Sasaki N."/>
            <person name="Aotsuka S."/>
            <person name="Yoshikawa Y."/>
            <person name="Matsunawa H."/>
            <person name="Ichihara T."/>
            <person name="Shiohata N."/>
            <person name="Sano S."/>
            <person name="Moriya S."/>
            <person name="Momiyama H."/>
            <person name="Satoh N."/>
            <person name="Takami S."/>
            <person name="Terashima Y."/>
            <person name="Suzuki O."/>
            <person name="Nakagawa S."/>
            <person name="Senoh A."/>
            <person name="Mizoguchi H."/>
            <person name="Goto Y."/>
            <person name="Shimizu F."/>
            <person name="Wakebe H."/>
            <person name="Hishigaki H."/>
            <person name="Watanabe T."/>
            <person name="Sugiyama A."/>
            <person name="Takemoto M."/>
            <person name="Kawakami B."/>
            <person name="Yamazaki M."/>
            <person name="Watanabe K."/>
            <person name="Kumagai A."/>
            <person name="Itakura S."/>
            <person name="Fukuzumi Y."/>
            <person name="Fujimori Y."/>
            <person name="Komiyama M."/>
            <person name="Tashiro H."/>
            <person name="Tanigami A."/>
            <person name="Fujiwara T."/>
            <person name="Ono T."/>
            <person name="Yamada K."/>
            <person name="Fujii Y."/>
            <person name="Ozaki K."/>
            <person name="Hirao M."/>
            <person name="Ohmori Y."/>
            <person name="Kawabata A."/>
            <person name="Hikiji T."/>
            <person name="Kobatake N."/>
            <person name="Inagaki H."/>
            <person name="Ikema Y."/>
            <person name="Okamoto S."/>
            <person name="Okitani R."/>
            <person name="Kawakami T."/>
            <person name="Noguchi S."/>
            <person name="Itoh T."/>
            <person name="Shigeta K."/>
            <person name="Senba T."/>
            <person name="Matsumura K."/>
            <person name="Nakajima Y."/>
            <person name="Mizuno T."/>
            <person name="Morinaga M."/>
            <person name="Sasaki M."/>
            <person name="Togashi T."/>
            <person name="Oyama M."/>
            <person name="Hata H."/>
            <person name="Watanabe M."/>
            <person name="Komatsu T."/>
            <person name="Mizushima-Sugano J."/>
            <person name="Satoh T."/>
            <person name="Shirai Y."/>
            <person name="Takahashi Y."/>
            <person name="Nakagawa K."/>
            <person name="Okumura K."/>
            <person name="Nagase T."/>
            <person name="Nomura N."/>
            <person name="Kikuchi H."/>
            <person name="Masuho Y."/>
            <person name="Yamashita R."/>
            <person name="Nakai K."/>
            <person name="Yada T."/>
            <person name="Nakamura Y."/>
            <person name="Ohara O."/>
            <person name="Isogai T."/>
            <person name="Sugano S."/>
        </authorList>
    </citation>
    <scope>NUCLEOTIDE SEQUENCE [LARGE SCALE MRNA]</scope>
    <source>
        <tissue>Small intestine</tissue>
    </source>
</reference>
<reference key="2">
    <citation type="journal article" date="2004" name="Nature">
        <title>The DNA sequence and biology of human chromosome 19.</title>
        <authorList>
            <person name="Grimwood J."/>
            <person name="Gordon L.A."/>
            <person name="Olsen A.S."/>
            <person name="Terry A."/>
            <person name="Schmutz J."/>
            <person name="Lamerdin J.E."/>
            <person name="Hellsten U."/>
            <person name="Goodstein D."/>
            <person name="Couronne O."/>
            <person name="Tran-Gyamfi M."/>
            <person name="Aerts A."/>
            <person name="Altherr M."/>
            <person name="Ashworth L."/>
            <person name="Bajorek E."/>
            <person name="Black S."/>
            <person name="Branscomb E."/>
            <person name="Caenepeel S."/>
            <person name="Carrano A.V."/>
            <person name="Caoile C."/>
            <person name="Chan Y.M."/>
            <person name="Christensen M."/>
            <person name="Cleland C.A."/>
            <person name="Copeland A."/>
            <person name="Dalin E."/>
            <person name="Dehal P."/>
            <person name="Denys M."/>
            <person name="Detter J.C."/>
            <person name="Escobar J."/>
            <person name="Flowers D."/>
            <person name="Fotopulos D."/>
            <person name="Garcia C."/>
            <person name="Georgescu A.M."/>
            <person name="Glavina T."/>
            <person name="Gomez M."/>
            <person name="Gonzales E."/>
            <person name="Groza M."/>
            <person name="Hammon N."/>
            <person name="Hawkins T."/>
            <person name="Haydu L."/>
            <person name="Ho I."/>
            <person name="Huang W."/>
            <person name="Israni S."/>
            <person name="Jett J."/>
            <person name="Kadner K."/>
            <person name="Kimball H."/>
            <person name="Kobayashi A."/>
            <person name="Larionov V."/>
            <person name="Leem S.-H."/>
            <person name="Lopez F."/>
            <person name="Lou Y."/>
            <person name="Lowry S."/>
            <person name="Malfatti S."/>
            <person name="Martinez D."/>
            <person name="McCready P.M."/>
            <person name="Medina C."/>
            <person name="Morgan J."/>
            <person name="Nelson K."/>
            <person name="Nolan M."/>
            <person name="Ovcharenko I."/>
            <person name="Pitluck S."/>
            <person name="Pollard M."/>
            <person name="Popkie A.P."/>
            <person name="Predki P."/>
            <person name="Quan G."/>
            <person name="Ramirez L."/>
            <person name="Rash S."/>
            <person name="Retterer J."/>
            <person name="Rodriguez A."/>
            <person name="Rogers S."/>
            <person name="Salamov A."/>
            <person name="Salazar A."/>
            <person name="She X."/>
            <person name="Smith D."/>
            <person name="Slezak T."/>
            <person name="Solovyev V."/>
            <person name="Thayer N."/>
            <person name="Tice H."/>
            <person name="Tsai M."/>
            <person name="Ustaszewska A."/>
            <person name="Vo N."/>
            <person name="Wagner M."/>
            <person name="Wheeler J."/>
            <person name="Wu K."/>
            <person name="Xie G."/>
            <person name="Yang J."/>
            <person name="Dubchak I."/>
            <person name="Furey T.S."/>
            <person name="DeJong P."/>
            <person name="Dickson M."/>
            <person name="Gordon D."/>
            <person name="Eichler E.E."/>
            <person name="Pennacchio L.A."/>
            <person name="Richardson P."/>
            <person name="Stubbs L."/>
            <person name="Rokhsar D.S."/>
            <person name="Myers R.M."/>
            <person name="Rubin E.M."/>
            <person name="Lucas S.M."/>
        </authorList>
    </citation>
    <scope>NUCLEOTIDE SEQUENCE [LARGE SCALE GENOMIC DNA]</scope>
</reference>
<reference key="3">
    <citation type="journal article" date="2006" name="Nat. Biotechnol.">
        <title>A probability-based approach for high-throughput protein phosphorylation analysis and site localization.</title>
        <authorList>
            <person name="Beausoleil S.A."/>
            <person name="Villen J."/>
            <person name="Gerber S.A."/>
            <person name="Rush J."/>
            <person name="Gygi S.P."/>
        </authorList>
    </citation>
    <scope>PHOSPHORYLATION [LARGE SCALE ANALYSIS] AT SER-483</scope>
    <scope>IDENTIFICATION BY MASS SPECTROMETRY [LARGE SCALE ANALYSIS]</scope>
    <source>
        <tissue>Cervix carcinoma</tissue>
    </source>
</reference>
<reference key="4">
    <citation type="journal article" date="2010" name="Sci. Signal.">
        <title>Quantitative phosphoproteomics reveals widespread full phosphorylation site occupancy during mitosis.</title>
        <authorList>
            <person name="Olsen J.V."/>
            <person name="Vermeulen M."/>
            <person name="Santamaria A."/>
            <person name="Kumar C."/>
            <person name="Miller M.L."/>
            <person name="Jensen L.J."/>
            <person name="Gnad F."/>
            <person name="Cox J."/>
            <person name="Jensen T.S."/>
            <person name="Nigg E.A."/>
            <person name="Brunak S."/>
            <person name="Mann M."/>
        </authorList>
    </citation>
    <scope>PHOSPHORYLATION [LARGE SCALE ANALYSIS] AT SER-483</scope>
    <scope>IDENTIFICATION BY MASS SPECTROMETRY [LARGE SCALE ANALYSIS]</scope>
    <source>
        <tissue>Cervix carcinoma</tissue>
    </source>
</reference>
<reference key="5">
    <citation type="journal article" date="2011" name="Sci. Signal.">
        <title>System-wide temporal characterization of the proteome and phosphoproteome of human embryonic stem cell differentiation.</title>
        <authorList>
            <person name="Rigbolt K.T."/>
            <person name="Prokhorova T.A."/>
            <person name="Akimov V."/>
            <person name="Henningsen J."/>
            <person name="Johansen P.T."/>
            <person name="Kratchmarova I."/>
            <person name="Kassem M."/>
            <person name="Mann M."/>
            <person name="Olsen J.V."/>
            <person name="Blagoev B."/>
        </authorList>
    </citation>
    <scope>PHOSPHORYLATION [LARGE SCALE ANALYSIS] AT SER-194 AND SER-196</scope>
    <scope>IDENTIFICATION BY MASS SPECTROMETRY [LARGE SCALE ANALYSIS]</scope>
</reference>
<reference key="6">
    <citation type="journal article" date="2013" name="J. Proteome Res.">
        <title>Toward a comprehensive characterization of a human cancer cell phosphoproteome.</title>
        <authorList>
            <person name="Zhou H."/>
            <person name="Di Palma S."/>
            <person name="Preisinger C."/>
            <person name="Peng M."/>
            <person name="Polat A.N."/>
            <person name="Heck A.J."/>
            <person name="Mohammed S."/>
        </authorList>
    </citation>
    <scope>PHOSPHORYLATION [LARGE SCALE ANALYSIS] AT SER-194 AND SER-483</scope>
    <scope>IDENTIFICATION BY MASS SPECTROMETRY [LARGE SCALE ANALYSIS]</scope>
    <source>
        <tissue>Cervix carcinoma</tissue>
        <tissue>Erythroleukemia</tissue>
    </source>
</reference>
<reference key="7">
    <citation type="journal article" date="2014" name="Mol. Cell. Proteomics">
        <title>Immunoaffinity enrichment and mass spectrometry analysis of protein methylation.</title>
        <authorList>
            <person name="Guo A."/>
            <person name="Gu H."/>
            <person name="Zhou J."/>
            <person name="Mulhern D."/>
            <person name="Wang Y."/>
            <person name="Lee K.A."/>
            <person name="Yang V."/>
            <person name="Aguiar M."/>
            <person name="Kornhauser J."/>
            <person name="Jia X."/>
            <person name="Ren J."/>
            <person name="Beausoleil S.A."/>
            <person name="Silva J.C."/>
            <person name="Vemulapalli V."/>
            <person name="Bedford M.T."/>
            <person name="Comb M.J."/>
        </authorList>
    </citation>
    <scope>METHYLATION [LARGE SCALE ANALYSIS] AT ARG-92</scope>
    <scope>IDENTIFICATION BY MASS SPECTROMETRY [LARGE SCALE ANALYSIS]</scope>
    <source>
        <tissue>Colon carcinoma</tissue>
    </source>
</reference>
<proteinExistence type="evidence at protein level"/>
<comment type="function">
    <text>May be involved in transcriptional regulation.</text>
</comment>
<comment type="interaction">
    <interactant intactId="EBI-6164383">
        <id>Q8NAF0</id>
    </interactant>
    <interactant intactId="EBI-1055147">
        <id>Q14739</id>
        <label>LBR</label>
    </interactant>
    <organismsDiffer>false</organismsDiffer>
    <experiments>2</experiments>
</comment>
<comment type="interaction">
    <interactant intactId="EBI-6164383">
        <id>Q8NAF0</id>
    </interactant>
    <interactant intactId="EBI-25475894">
        <id>P0DTC3</id>
        <label>3a</label>
    </interactant>
    <organismsDiffer>true</organismsDiffer>
    <experiments>2</experiments>
</comment>
<comment type="subcellular location">
    <subcellularLocation>
        <location evidence="3">Nucleus</location>
    </subcellularLocation>
</comment>
<comment type="similarity">
    <text evidence="3">Belongs to the krueppel C2H2-type zinc-finger protein family.</text>
</comment>
<dbReference type="EMBL" id="AK092772">
    <property type="protein sequence ID" value="BAC03972.1"/>
    <property type="molecule type" value="mRNA"/>
</dbReference>
<dbReference type="EMBL" id="AC008735">
    <property type="status" value="NOT_ANNOTATED_CDS"/>
    <property type="molecule type" value="Genomic_DNA"/>
</dbReference>
<dbReference type="CCDS" id="CCDS12927.1"/>
<dbReference type="RefSeq" id="NP_689813.2">
    <property type="nucleotide sequence ID" value="NM_152600.3"/>
</dbReference>
<dbReference type="BioGRID" id="127842">
    <property type="interactions" value="78"/>
</dbReference>
<dbReference type="FunCoup" id="Q8NAF0">
    <property type="interactions" value="408"/>
</dbReference>
<dbReference type="IntAct" id="Q8NAF0">
    <property type="interactions" value="57"/>
</dbReference>
<dbReference type="MINT" id="Q8NAF0"/>
<dbReference type="STRING" id="9606.ENSP00000320188"/>
<dbReference type="GlyGen" id="Q8NAF0">
    <property type="glycosylation" value="2 sites"/>
</dbReference>
<dbReference type="iPTMnet" id="Q8NAF0"/>
<dbReference type="PhosphoSitePlus" id="Q8NAF0"/>
<dbReference type="BioMuta" id="ZNF579"/>
<dbReference type="DMDM" id="296453047"/>
<dbReference type="jPOST" id="Q8NAF0"/>
<dbReference type="MassIVE" id="Q8NAF0"/>
<dbReference type="PaxDb" id="9606-ENSP00000320188"/>
<dbReference type="PeptideAtlas" id="Q8NAF0"/>
<dbReference type="ProteomicsDB" id="72674"/>
<dbReference type="Pumba" id="Q8NAF0"/>
<dbReference type="Antibodypedia" id="33125">
    <property type="antibodies" value="46 antibodies from 13 providers"/>
</dbReference>
<dbReference type="DNASU" id="163033"/>
<dbReference type="Ensembl" id="ENST00000325421.7">
    <property type="protein sequence ID" value="ENSP00000320188.3"/>
    <property type="gene ID" value="ENSG00000218891.5"/>
</dbReference>
<dbReference type="GeneID" id="163033"/>
<dbReference type="KEGG" id="hsa:163033"/>
<dbReference type="MANE-Select" id="ENST00000325421.7">
    <property type="protein sequence ID" value="ENSP00000320188.3"/>
    <property type="RefSeq nucleotide sequence ID" value="NM_152600.3"/>
    <property type="RefSeq protein sequence ID" value="NP_689813.2"/>
</dbReference>
<dbReference type="UCSC" id="uc002qlh.4">
    <property type="organism name" value="human"/>
</dbReference>
<dbReference type="AGR" id="HGNC:26646"/>
<dbReference type="CTD" id="163033"/>
<dbReference type="GeneCards" id="ZNF579"/>
<dbReference type="HGNC" id="HGNC:26646">
    <property type="gene designation" value="ZNF579"/>
</dbReference>
<dbReference type="HPA" id="ENSG00000218891">
    <property type="expression patterns" value="Low tissue specificity"/>
</dbReference>
<dbReference type="neXtProt" id="NX_Q8NAF0"/>
<dbReference type="OpenTargets" id="ENSG00000218891"/>
<dbReference type="PharmGKB" id="PA134930711"/>
<dbReference type="VEuPathDB" id="HostDB:ENSG00000218891"/>
<dbReference type="eggNOG" id="KOG1721">
    <property type="taxonomic scope" value="Eukaryota"/>
</dbReference>
<dbReference type="GeneTree" id="ENSGT00930000151080"/>
<dbReference type="HOGENOM" id="CLU_487114_0_0_1"/>
<dbReference type="InParanoid" id="Q8NAF0"/>
<dbReference type="OMA" id="SPRYTHW"/>
<dbReference type="OrthoDB" id="10004641at2759"/>
<dbReference type="PAN-GO" id="Q8NAF0">
    <property type="GO annotations" value="0 GO annotations based on evolutionary models"/>
</dbReference>
<dbReference type="PhylomeDB" id="Q8NAF0"/>
<dbReference type="TreeFam" id="TF331849"/>
<dbReference type="PathwayCommons" id="Q8NAF0"/>
<dbReference type="SignaLink" id="Q8NAF0"/>
<dbReference type="BioGRID-ORCS" id="163033">
    <property type="hits" value="17 hits in 1183 CRISPR screens"/>
</dbReference>
<dbReference type="GenomeRNAi" id="163033"/>
<dbReference type="Pharos" id="Q8NAF0">
    <property type="development level" value="Tdark"/>
</dbReference>
<dbReference type="PRO" id="PR:Q8NAF0"/>
<dbReference type="Proteomes" id="UP000005640">
    <property type="component" value="Chromosome 19"/>
</dbReference>
<dbReference type="RNAct" id="Q8NAF0">
    <property type="molecule type" value="protein"/>
</dbReference>
<dbReference type="Bgee" id="ENSG00000218891">
    <property type="expression patterns" value="Expressed in upper arm skin and 175 other cell types or tissues"/>
</dbReference>
<dbReference type="ExpressionAtlas" id="Q8NAF0">
    <property type="expression patterns" value="baseline and differential"/>
</dbReference>
<dbReference type="GO" id="GO:0005634">
    <property type="term" value="C:nucleus"/>
    <property type="evidence" value="ECO:0007669"/>
    <property type="project" value="UniProtKB-SubCell"/>
</dbReference>
<dbReference type="GO" id="GO:0000981">
    <property type="term" value="F:DNA-binding transcription factor activity, RNA polymerase II-specific"/>
    <property type="evidence" value="ECO:0000314"/>
    <property type="project" value="ARUK-UCL"/>
</dbReference>
<dbReference type="GO" id="GO:0003723">
    <property type="term" value="F:RNA binding"/>
    <property type="evidence" value="ECO:0007005"/>
    <property type="project" value="UniProtKB"/>
</dbReference>
<dbReference type="GO" id="GO:0000976">
    <property type="term" value="F:transcription cis-regulatory region binding"/>
    <property type="evidence" value="ECO:0000314"/>
    <property type="project" value="ARUK-UCL"/>
</dbReference>
<dbReference type="GO" id="GO:0008270">
    <property type="term" value="F:zinc ion binding"/>
    <property type="evidence" value="ECO:0007669"/>
    <property type="project" value="UniProtKB-KW"/>
</dbReference>
<dbReference type="GO" id="GO:0006357">
    <property type="term" value="P:regulation of transcription by RNA polymerase II"/>
    <property type="evidence" value="ECO:0000314"/>
    <property type="project" value="ARUK-UCL"/>
</dbReference>
<dbReference type="FunFam" id="3.30.160.60:FF:000111">
    <property type="entry name" value="GLI family zinc finger 4"/>
    <property type="match status" value="1"/>
</dbReference>
<dbReference type="FunFam" id="3.30.160.60:FF:000045">
    <property type="entry name" value="ZFP69 zinc finger protein B"/>
    <property type="match status" value="1"/>
</dbReference>
<dbReference type="FunFam" id="3.30.160.60:FF:000344">
    <property type="entry name" value="zinc finger protein 90 homolog"/>
    <property type="match status" value="1"/>
</dbReference>
<dbReference type="Gene3D" id="3.30.160.60">
    <property type="entry name" value="Classic Zinc Finger"/>
    <property type="match status" value="7"/>
</dbReference>
<dbReference type="InterPro" id="IPR036236">
    <property type="entry name" value="Znf_C2H2_sf"/>
</dbReference>
<dbReference type="InterPro" id="IPR013087">
    <property type="entry name" value="Znf_C2H2_type"/>
</dbReference>
<dbReference type="PANTHER" id="PTHR24383">
    <property type="entry name" value="ZINC FINGER PROTEIN"/>
    <property type="match status" value="1"/>
</dbReference>
<dbReference type="PANTHER" id="PTHR24383:SF14">
    <property type="entry name" value="ZINC FINGER PROTEIN 579"/>
    <property type="match status" value="1"/>
</dbReference>
<dbReference type="Pfam" id="PF00096">
    <property type="entry name" value="zf-C2H2"/>
    <property type="match status" value="7"/>
</dbReference>
<dbReference type="SMART" id="SM00355">
    <property type="entry name" value="ZnF_C2H2"/>
    <property type="match status" value="8"/>
</dbReference>
<dbReference type="SUPFAM" id="SSF57667">
    <property type="entry name" value="beta-beta-alpha zinc fingers"/>
    <property type="match status" value="5"/>
</dbReference>
<dbReference type="PROSITE" id="PS00028">
    <property type="entry name" value="ZINC_FINGER_C2H2_1"/>
    <property type="match status" value="8"/>
</dbReference>
<dbReference type="PROSITE" id="PS50157">
    <property type="entry name" value="ZINC_FINGER_C2H2_2"/>
    <property type="match status" value="8"/>
</dbReference>
<keyword id="KW-0238">DNA-binding</keyword>
<keyword id="KW-0479">Metal-binding</keyword>
<keyword id="KW-0488">Methylation</keyword>
<keyword id="KW-0539">Nucleus</keyword>
<keyword id="KW-0597">Phosphoprotein</keyword>
<keyword id="KW-1267">Proteomics identification</keyword>
<keyword id="KW-1185">Reference proteome</keyword>
<keyword id="KW-0677">Repeat</keyword>
<keyword id="KW-0804">Transcription</keyword>
<keyword id="KW-0805">Transcription regulation</keyword>
<keyword id="KW-0862">Zinc</keyword>
<keyword id="KW-0863">Zinc-finger</keyword>
<protein>
    <recommendedName>
        <fullName>Zinc finger protein 579</fullName>
    </recommendedName>
</protein>
<name>ZN579_HUMAN</name>
<evidence type="ECO:0000255" key="1">
    <source>
        <dbReference type="PROSITE-ProRule" id="PRU00042"/>
    </source>
</evidence>
<evidence type="ECO:0000256" key="2">
    <source>
        <dbReference type="SAM" id="MobiDB-lite"/>
    </source>
</evidence>
<evidence type="ECO:0000305" key="3"/>
<evidence type="ECO:0007744" key="4">
    <source>
    </source>
</evidence>
<evidence type="ECO:0007744" key="5">
    <source>
    </source>
</evidence>
<evidence type="ECO:0007744" key="6">
    <source>
    </source>
</evidence>
<evidence type="ECO:0007744" key="7">
    <source>
    </source>
</evidence>
<evidence type="ECO:0007744" key="8">
    <source>
    </source>
</evidence>
<accession>Q8NAF0</accession>
<sequence>MDPQPPPPAQGSPPHRGRGRGRGRGRGRGRGRGRGGAGAPRAPLPCPTCGRLFRFPYYLSRHRLSHSGLRPHACPLCPKAFRRPAHLSRHLRGHGPQPPLRCAACPRTFPEPAQLRRHLAQEHAGGEVELAIERVAKETAEPSWGPQDEGSEPPTTAAAGATEEEAVAAWPETWPAGEPSTLAAPTSAAEPRESESEEAEAGAAELRAELALAAGRQEEKQVLLQADWTLLCLRCREAFATKGELKAHPCLRPEGEQEGEGGPPPRPKRHQCSICLKAFARPWSLSRHRLVHSTDRPFVCPDCGLAFRLASYLRQHRRVHGPLSLLAPLPAAGKKDDKASGARNSAKGPEGGEGAECGGASEGGEGQNGGDAAPARPPAGEPRFWCPECGKGFRRRAHLRQHGVTHSGARPFQCVRCQREFKRLADLARHAQVHAGGPAPHPCPRCPRRFSRAYSLLRHQRCHRAELERAAALQALQAQAPTSPPPPPPPLKAEQEEEGLPLPLANIKEEPPSPGTPPQSPPAPPVFLSASCFDSQDHSAFEMEEEEVDSKAHLRGLGGLAS</sequence>
<feature type="chain" id="PRO_0000047669" description="Zinc finger protein 579">
    <location>
        <begin position="1"/>
        <end position="562"/>
    </location>
</feature>
<feature type="zinc finger region" description="C2H2-type 1" evidence="1">
    <location>
        <begin position="44"/>
        <end position="66"/>
    </location>
</feature>
<feature type="zinc finger region" description="C2H2-type 2" evidence="1">
    <location>
        <begin position="72"/>
        <end position="94"/>
    </location>
</feature>
<feature type="zinc finger region" description="C2H2-type 3" evidence="1">
    <location>
        <begin position="100"/>
        <end position="123"/>
    </location>
</feature>
<feature type="zinc finger region" description="C2H2-type 4" evidence="1">
    <location>
        <begin position="270"/>
        <end position="292"/>
    </location>
</feature>
<feature type="zinc finger region" description="C2H2-type 5" evidence="1">
    <location>
        <begin position="298"/>
        <end position="320"/>
    </location>
</feature>
<feature type="zinc finger region" description="C2H2-type 6" evidence="1">
    <location>
        <begin position="384"/>
        <end position="406"/>
    </location>
</feature>
<feature type="zinc finger region" description="C2H2-type 7" evidence="1">
    <location>
        <begin position="412"/>
        <end position="434"/>
    </location>
</feature>
<feature type="zinc finger region" description="C2H2-type 8" evidence="1">
    <location>
        <begin position="441"/>
        <end position="463"/>
    </location>
</feature>
<feature type="region of interest" description="Disordered" evidence="2">
    <location>
        <begin position="1"/>
        <end position="43"/>
    </location>
</feature>
<feature type="region of interest" description="Disordered" evidence="2">
    <location>
        <begin position="139"/>
        <end position="203"/>
    </location>
</feature>
<feature type="region of interest" description="Disordered" evidence="2">
    <location>
        <begin position="327"/>
        <end position="379"/>
    </location>
</feature>
<feature type="region of interest" description="Disordered" evidence="2">
    <location>
        <begin position="477"/>
        <end position="562"/>
    </location>
</feature>
<feature type="compositionally biased region" description="Pro residues" evidence="2">
    <location>
        <begin position="1"/>
        <end position="11"/>
    </location>
</feature>
<feature type="compositionally biased region" description="Basic residues" evidence="2">
    <location>
        <begin position="15"/>
        <end position="33"/>
    </location>
</feature>
<feature type="compositionally biased region" description="Gly residues" evidence="2">
    <location>
        <begin position="349"/>
        <end position="369"/>
    </location>
</feature>
<feature type="compositionally biased region" description="Pro residues" evidence="2">
    <location>
        <begin position="482"/>
        <end position="491"/>
    </location>
</feature>
<feature type="compositionally biased region" description="Pro residues" evidence="2">
    <location>
        <begin position="512"/>
        <end position="525"/>
    </location>
</feature>
<feature type="modified residue" description="Omega-N-methylarginine" evidence="8">
    <location>
        <position position="92"/>
    </location>
</feature>
<feature type="modified residue" description="Phosphoserine" evidence="6 7">
    <location>
        <position position="194"/>
    </location>
</feature>
<feature type="modified residue" description="Phosphoserine" evidence="6">
    <location>
        <position position="196"/>
    </location>
</feature>
<feature type="modified residue" description="Phosphoserine" evidence="4 5 7">
    <location>
        <position position="483"/>
    </location>
</feature>
<feature type="sequence variant" id="VAR_061956" description="In dbSNP:rs10403008.">
    <original>E</original>
    <variation>D</variation>
    <location>
        <position position="353"/>
    </location>
</feature>
<feature type="sequence conflict" description="In Ref. 1; BAC03972." evidence="3" ref="1">
    <original>W</original>
    <variation>R</variation>
    <location>
        <position position="228"/>
    </location>
</feature>
<gene>
    <name type="primary">ZNF579</name>
</gene>